<accession>B1JDP1</accession>
<reference key="1">
    <citation type="submission" date="2008-02" db="EMBL/GenBank/DDBJ databases">
        <title>Complete sequence of Pseudomonas putida W619.</title>
        <authorList>
            <person name="Copeland A."/>
            <person name="Lucas S."/>
            <person name="Lapidus A."/>
            <person name="Barry K."/>
            <person name="Detter J.C."/>
            <person name="Glavina del Rio T."/>
            <person name="Dalin E."/>
            <person name="Tice H."/>
            <person name="Pitluck S."/>
            <person name="Chain P."/>
            <person name="Malfatti S."/>
            <person name="Shin M."/>
            <person name="Vergez L."/>
            <person name="Schmutz J."/>
            <person name="Larimer F."/>
            <person name="Land M."/>
            <person name="Hauser L."/>
            <person name="Kyrpides N."/>
            <person name="Kim E."/>
            <person name="Taghavi S."/>
            <person name="Vangronsveld D."/>
            <person name="van der Lelie D."/>
            <person name="Richardson P."/>
        </authorList>
    </citation>
    <scope>NUCLEOTIDE SEQUENCE [LARGE SCALE GENOMIC DNA]</scope>
    <source>
        <strain>W619</strain>
    </source>
</reference>
<organism>
    <name type="scientific">Pseudomonas putida (strain W619)</name>
    <dbReference type="NCBI Taxonomy" id="390235"/>
    <lineage>
        <taxon>Bacteria</taxon>
        <taxon>Pseudomonadati</taxon>
        <taxon>Pseudomonadota</taxon>
        <taxon>Gammaproteobacteria</taxon>
        <taxon>Pseudomonadales</taxon>
        <taxon>Pseudomonadaceae</taxon>
        <taxon>Pseudomonas</taxon>
    </lineage>
</organism>
<dbReference type="EC" id="6.3.5.7" evidence="1"/>
<dbReference type="EMBL" id="CP000949">
    <property type="protein sequence ID" value="ACA74764.1"/>
    <property type="molecule type" value="Genomic_DNA"/>
</dbReference>
<dbReference type="SMR" id="B1JDP1"/>
<dbReference type="STRING" id="390235.PputW619_4284"/>
<dbReference type="KEGG" id="ppw:PputW619_4284"/>
<dbReference type="eggNOG" id="COG0154">
    <property type="taxonomic scope" value="Bacteria"/>
</dbReference>
<dbReference type="HOGENOM" id="CLU_009600_0_3_6"/>
<dbReference type="OrthoDB" id="9811471at2"/>
<dbReference type="GO" id="GO:0030956">
    <property type="term" value="C:glutamyl-tRNA(Gln) amidotransferase complex"/>
    <property type="evidence" value="ECO:0007669"/>
    <property type="project" value="InterPro"/>
</dbReference>
<dbReference type="GO" id="GO:0005524">
    <property type="term" value="F:ATP binding"/>
    <property type="evidence" value="ECO:0007669"/>
    <property type="project" value="UniProtKB-KW"/>
</dbReference>
<dbReference type="GO" id="GO:0050567">
    <property type="term" value="F:glutaminyl-tRNA synthase (glutamine-hydrolyzing) activity"/>
    <property type="evidence" value="ECO:0007669"/>
    <property type="project" value="UniProtKB-UniRule"/>
</dbReference>
<dbReference type="GO" id="GO:0006412">
    <property type="term" value="P:translation"/>
    <property type="evidence" value="ECO:0007669"/>
    <property type="project" value="UniProtKB-UniRule"/>
</dbReference>
<dbReference type="Gene3D" id="3.90.1300.10">
    <property type="entry name" value="Amidase signature (AS) domain"/>
    <property type="match status" value="1"/>
</dbReference>
<dbReference type="HAMAP" id="MF_00120">
    <property type="entry name" value="GatA"/>
    <property type="match status" value="1"/>
</dbReference>
<dbReference type="InterPro" id="IPR000120">
    <property type="entry name" value="Amidase"/>
</dbReference>
<dbReference type="InterPro" id="IPR020556">
    <property type="entry name" value="Amidase_CS"/>
</dbReference>
<dbReference type="InterPro" id="IPR023631">
    <property type="entry name" value="Amidase_dom"/>
</dbReference>
<dbReference type="InterPro" id="IPR036928">
    <property type="entry name" value="AS_sf"/>
</dbReference>
<dbReference type="InterPro" id="IPR004412">
    <property type="entry name" value="GatA"/>
</dbReference>
<dbReference type="NCBIfam" id="TIGR00132">
    <property type="entry name" value="gatA"/>
    <property type="match status" value="1"/>
</dbReference>
<dbReference type="PANTHER" id="PTHR11895:SF151">
    <property type="entry name" value="GLUTAMYL-TRNA(GLN) AMIDOTRANSFERASE SUBUNIT A"/>
    <property type="match status" value="1"/>
</dbReference>
<dbReference type="PANTHER" id="PTHR11895">
    <property type="entry name" value="TRANSAMIDASE"/>
    <property type="match status" value="1"/>
</dbReference>
<dbReference type="Pfam" id="PF01425">
    <property type="entry name" value="Amidase"/>
    <property type="match status" value="1"/>
</dbReference>
<dbReference type="SUPFAM" id="SSF75304">
    <property type="entry name" value="Amidase signature (AS) enzymes"/>
    <property type="match status" value="1"/>
</dbReference>
<dbReference type="PROSITE" id="PS00571">
    <property type="entry name" value="AMIDASES"/>
    <property type="match status" value="1"/>
</dbReference>
<comment type="function">
    <text evidence="1">Allows the formation of correctly charged Gln-tRNA(Gln) through the transamidation of misacylated Glu-tRNA(Gln) in organisms which lack glutaminyl-tRNA synthetase. The reaction takes place in the presence of glutamine and ATP through an activated gamma-phospho-Glu-tRNA(Gln).</text>
</comment>
<comment type="catalytic activity">
    <reaction evidence="1">
        <text>L-glutamyl-tRNA(Gln) + L-glutamine + ATP + H2O = L-glutaminyl-tRNA(Gln) + L-glutamate + ADP + phosphate + H(+)</text>
        <dbReference type="Rhea" id="RHEA:17521"/>
        <dbReference type="Rhea" id="RHEA-COMP:9681"/>
        <dbReference type="Rhea" id="RHEA-COMP:9684"/>
        <dbReference type="ChEBI" id="CHEBI:15377"/>
        <dbReference type="ChEBI" id="CHEBI:15378"/>
        <dbReference type="ChEBI" id="CHEBI:29985"/>
        <dbReference type="ChEBI" id="CHEBI:30616"/>
        <dbReference type="ChEBI" id="CHEBI:43474"/>
        <dbReference type="ChEBI" id="CHEBI:58359"/>
        <dbReference type="ChEBI" id="CHEBI:78520"/>
        <dbReference type="ChEBI" id="CHEBI:78521"/>
        <dbReference type="ChEBI" id="CHEBI:456216"/>
        <dbReference type="EC" id="6.3.5.7"/>
    </reaction>
</comment>
<comment type="subunit">
    <text evidence="1">Heterotrimer of A, B and C subunits.</text>
</comment>
<comment type="similarity">
    <text evidence="1">Belongs to the amidase family. GatA subfamily.</text>
</comment>
<keyword id="KW-0067">ATP-binding</keyword>
<keyword id="KW-0436">Ligase</keyword>
<keyword id="KW-0547">Nucleotide-binding</keyword>
<keyword id="KW-0648">Protein biosynthesis</keyword>
<gene>
    <name evidence="1" type="primary">gatA</name>
    <name type="ordered locus">PputW619_4284</name>
</gene>
<name>GATA_PSEPW</name>
<evidence type="ECO:0000255" key="1">
    <source>
        <dbReference type="HAMAP-Rule" id="MF_00120"/>
    </source>
</evidence>
<proteinExistence type="inferred from homology"/>
<feature type="chain" id="PRO_1000095162" description="Glutamyl-tRNA(Gln) amidotransferase subunit A">
    <location>
        <begin position="1"/>
        <end position="483"/>
    </location>
</feature>
<feature type="active site" description="Charge relay system" evidence="1">
    <location>
        <position position="76"/>
    </location>
</feature>
<feature type="active site" description="Charge relay system" evidence="1">
    <location>
        <position position="151"/>
    </location>
</feature>
<feature type="active site" description="Acyl-ester intermediate" evidence="1">
    <location>
        <position position="175"/>
    </location>
</feature>
<protein>
    <recommendedName>
        <fullName evidence="1">Glutamyl-tRNA(Gln) amidotransferase subunit A</fullName>
        <shortName evidence="1">Glu-ADT subunit A</shortName>
        <ecNumber evidence="1">6.3.5.7</ecNumber>
    </recommendedName>
</protein>
<sequence>MHQLTLAEIARGLADKSFSSEELTGALLARIQQLDPQLNSFISVTEELALGQARAADARRAAGETGALLGAPIAHKDLFCTNGVRTSCGSKMLDNFKAPYDATVVAKLAEAGMVTLGKTNMDEFAMGSANESSHYGAVKNPWNLEHVPGGSSGGSAAAVAARLLPATTGTDTGGSIRQPAALTNLTGLKPTYGRVSRWGMIAYASSLDQGGPLARTAEDCALLLQGMAGFDAKDSTSIDEPVPDYSANLNASLQGLRIGLPKEYFGAGLDPRIAELVQASVKELEKLGAVVKEISLPNMQHAIPAYYVIAPAEASSNLSRFDGVRFGYRCDEPKDLTDLYKRSRGEGFGAEVQRRIMVGTYALSAGYYDAYYVKAQQIRRLIKNDFMAAFEGVDLILGPTTPNPAWKLGAKSSDPVAAYLEDVYTITANLAGLPGLSMPAGFVDGLPVGVQLLAPYFQEGRLLNVAHRYQQVTDWHTRAPNGF</sequence>